<evidence type="ECO:0000250" key="1">
    <source>
        <dbReference type="UniProtKB" id="B9KDD4"/>
    </source>
</evidence>
<evidence type="ECO:0000250" key="2">
    <source>
        <dbReference type="UniProtKB" id="F1PJP5"/>
    </source>
</evidence>
<evidence type="ECO:0000250" key="3">
    <source>
        <dbReference type="UniProtKB" id="P39007"/>
    </source>
</evidence>
<evidence type="ECO:0000250" key="4">
    <source>
        <dbReference type="UniProtKB" id="P46978"/>
    </source>
</evidence>
<evidence type="ECO:0000250" key="5">
    <source>
        <dbReference type="UniProtKB" id="Q5HTX9"/>
    </source>
</evidence>
<evidence type="ECO:0000255" key="6"/>
<evidence type="ECO:0000269" key="7">
    <source>
    </source>
</evidence>
<evidence type="ECO:0000269" key="8">
    <source>
    </source>
</evidence>
<evidence type="ECO:0000269" key="9">
    <source>
    </source>
</evidence>
<evidence type="ECO:0000269" key="10">
    <source>
    </source>
</evidence>
<evidence type="ECO:0000269" key="11">
    <source>
    </source>
</evidence>
<evidence type="ECO:0000269" key="12">
    <source>
    </source>
</evidence>
<evidence type="ECO:0000269" key="13">
    <source>
    </source>
</evidence>
<evidence type="ECO:0000269" key="14">
    <source>
    </source>
</evidence>
<evidence type="ECO:0000269" key="15">
    <source>
    </source>
</evidence>
<evidence type="ECO:0000269" key="16">
    <source>
    </source>
</evidence>
<evidence type="ECO:0000269" key="17">
    <source>
    </source>
</evidence>
<evidence type="ECO:0000269" key="18">
    <source>
    </source>
</evidence>
<evidence type="ECO:0000303" key="19">
    <source>
    </source>
</evidence>
<evidence type="ECO:0000303" key="20">
    <source>
    </source>
</evidence>
<evidence type="ECO:0000303" key="21">
    <source>
    </source>
</evidence>
<evidence type="ECO:0000303" key="22">
    <source>
    </source>
</evidence>
<evidence type="ECO:0000305" key="23"/>
<evidence type="ECO:0000312" key="24">
    <source>
        <dbReference type="HGNC" id="HGNC:6172"/>
    </source>
</evidence>
<evidence type="ECO:0007744" key="25">
    <source>
        <dbReference type="PDB" id="6S7O"/>
    </source>
</evidence>
<evidence type="ECO:0007744" key="26">
    <source>
        <dbReference type="PDB" id="8B6L"/>
    </source>
</evidence>
<evidence type="ECO:0007744" key="27">
    <source>
        <dbReference type="PDB" id="8PN9"/>
    </source>
</evidence>
<evidence type="ECO:0007829" key="28">
    <source>
        <dbReference type="PDB" id="6S7O"/>
    </source>
</evidence>
<keyword id="KW-0002">3D-structure</keyword>
<keyword id="KW-0025">Alternative splicing</keyword>
<keyword id="KW-0900">Congenital disorder of glycosylation</keyword>
<keyword id="KW-0225">Disease variant</keyword>
<keyword id="KW-0256">Endoplasmic reticulum</keyword>
<keyword id="KW-0325">Glycoprotein</keyword>
<keyword id="KW-0328">Glycosyltransferase</keyword>
<keyword id="KW-0460">Magnesium</keyword>
<keyword id="KW-0464">Manganese</keyword>
<keyword id="KW-0472">Membrane</keyword>
<keyword id="KW-0479">Metal-binding</keyword>
<keyword id="KW-1267">Proteomics identification</keyword>
<keyword id="KW-1185">Reference proteome</keyword>
<keyword id="KW-0808">Transferase</keyword>
<keyword id="KW-0812">Transmembrane</keyword>
<keyword id="KW-1133">Transmembrane helix</keyword>
<accession>P46977</accession>
<accession>B4DJ24</accession>
<accession>E9PNQ1</accession>
<accession>Q86XU9</accession>
<accession>Q8TE35</accession>
<accession>Q8WUB4</accession>
<reference key="1">
    <citation type="journal article" date="1996" name="Genomics">
        <title>Molecular cloning of a highly conserved mouse and human integral membrane protein (Itm1) and genetic mapping to mouse chromosome 9.</title>
        <authorList>
            <person name="Hong G."/>
            <person name="Deleersnjider W."/>
            <person name="Kozak C.A."/>
            <person name="van Marck E."/>
            <person name="Tylzanowski P."/>
            <person name="Merregaert J."/>
        </authorList>
    </citation>
    <scope>NUCLEOTIDE SEQUENCE [MRNA] (ISOFORM 1)</scope>
</reference>
<reference key="2">
    <citation type="journal article" date="1996" name="Biochim. Biophys. Acta">
        <title>Isolation, characterization, and mapping to human chromosome 11q24-25 of a cDNA encoding a highly conserved putative transmembrane protein, TMC.</title>
        <authorList>
            <person name="Lissy N.A."/>
            <person name="Bellacosa A."/>
            <person name="Sonoda G."/>
            <person name="Miller P.D."/>
            <person name="Jhanwar S.C."/>
            <person name="Testa J.R."/>
        </authorList>
    </citation>
    <scope>NUCLEOTIDE SEQUENCE [MRNA] (ISOFORM 1)</scope>
</reference>
<reference key="3">
    <citation type="journal article" date="2004" name="Nat. Genet.">
        <title>Complete sequencing and characterization of 21,243 full-length human cDNAs.</title>
        <authorList>
            <person name="Ota T."/>
            <person name="Suzuki Y."/>
            <person name="Nishikawa T."/>
            <person name="Otsuki T."/>
            <person name="Sugiyama T."/>
            <person name="Irie R."/>
            <person name="Wakamatsu A."/>
            <person name="Hayashi K."/>
            <person name="Sato H."/>
            <person name="Nagai K."/>
            <person name="Kimura K."/>
            <person name="Makita H."/>
            <person name="Sekine M."/>
            <person name="Obayashi M."/>
            <person name="Nishi T."/>
            <person name="Shibahara T."/>
            <person name="Tanaka T."/>
            <person name="Ishii S."/>
            <person name="Yamamoto J."/>
            <person name="Saito K."/>
            <person name="Kawai Y."/>
            <person name="Isono Y."/>
            <person name="Nakamura Y."/>
            <person name="Nagahari K."/>
            <person name="Murakami K."/>
            <person name="Yasuda T."/>
            <person name="Iwayanagi T."/>
            <person name="Wagatsuma M."/>
            <person name="Shiratori A."/>
            <person name="Sudo H."/>
            <person name="Hosoiri T."/>
            <person name="Kaku Y."/>
            <person name="Kodaira H."/>
            <person name="Kondo H."/>
            <person name="Sugawara M."/>
            <person name="Takahashi M."/>
            <person name="Kanda K."/>
            <person name="Yokoi T."/>
            <person name="Furuya T."/>
            <person name="Kikkawa E."/>
            <person name="Omura Y."/>
            <person name="Abe K."/>
            <person name="Kamihara K."/>
            <person name="Katsuta N."/>
            <person name="Sato K."/>
            <person name="Tanikawa M."/>
            <person name="Yamazaki M."/>
            <person name="Ninomiya K."/>
            <person name="Ishibashi T."/>
            <person name="Yamashita H."/>
            <person name="Murakawa K."/>
            <person name="Fujimori K."/>
            <person name="Tanai H."/>
            <person name="Kimata M."/>
            <person name="Watanabe M."/>
            <person name="Hiraoka S."/>
            <person name="Chiba Y."/>
            <person name="Ishida S."/>
            <person name="Ono Y."/>
            <person name="Takiguchi S."/>
            <person name="Watanabe S."/>
            <person name="Yosida M."/>
            <person name="Hotuta T."/>
            <person name="Kusano J."/>
            <person name="Kanehori K."/>
            <person name="Takahashi-Fujii A."/>
            <person name="Hara H."/>
            <person name="Tanase T.-O."/>
            <person name="Nomura Y."/>
            <person name="Togiya S."/>
            <person name="Komai F."/>
            <person name="Hara R."/>
            <person name="Takeuchi K."/>
            <person name="Arita M."/>
            <person name="Imose N."/>
            <person name="Musashino K."/>
            <person name="Yuuki H."/>
            <person name="Oshima A."/>
            <person name="Sasaki N."/>
            <person name="Aotsuka S."/>
            <person name="Yoshikawa Y."/>
            <person name="Matsunawa H."/>
            <person name="Ichihara T."/>
            <person name="Shiohata N."/>
            <person name="Sano S."/>
            <person name="Moriya S."/>
            <person name="Momiyama H."/>
            <person name="Satoh N."/>
            <person name="Takami S."/>
            <person name="Terashima Y."/>
            <person name="Suzuki O."/>
            <person name="Nakagawa S."/>
            <person name="Senoh A."/>
            <person name="Mizoguchi H."/>
            <person name="Goto Y."/>
            <person name="Shimizu F."/>
            <person name="Wakebe H."/>
            <person name="Hishigaki H."/>
            <person name="Watanabe T."/>
            <person name="Sugiyama A."/>
            <person name="Takemoto M."/>
            <person name="Kawakami B."/>
            <person name="Yamazaki M."/>
            <person name="Watanabe K."/>
            <person name="Kumagai A."/>
            <person name="Itakura S."/>
            <person name="Fukuzumi Y."/>
            <person name="Fujimori Y."/>
            <person name="Komiyama M."/>
            <person name="Tashiro H."/>
            <person name="Tanigami A."/>
            <person name="Fujiwara T."/>
            <person name="Ono T."/>
            <person name="Yamada K."/>
            <person name="Fujii Y."/>
            <person name="Ozaki K."/>
            <person name="Hirao M."/>
            <person name="Ohmori Y."/>
            <person name="Kawabata A."/>
            <person name="Hikiji T."/>
            <person name="Kobatake N."/>
            <person name="Inagaki H."/>
            <person name="Ikema Y."/>
            <person name="Okamoto S."/>
            <person name="Okitani R."/>
            <person name="Kawakami T."/>
            <person name="Noguchi S."/>
            <person name="Itoh T."/>
            <person name="Shigeta K."/>
            <person name="Senba T."/>
            <person name="Matsumura K."/>
            <person name="Nakajima Y."/>
            <person name="Mizuno T."/>
            <person name="Morinaga M."/>
            <person name="Sasaki M."/>
            <person name="Togashi T."/>
            <person name="Oyama M."/>
            <person name="Hata H."/>
            <person name="Watanabe M."/>
            <person name="Komatsu T."/>
            <person name="Mizushima-Sugano J."/>
            <person name="Satoh T."/>
            <person name="Shirai Y."/>
            <person name="Takahashi Y."/>
            <person name="Nakagawa K."/>
            <person name="Okumura K."/>
            <person name="Nagase T."/>
            <person name="Nomura N."/>
            <person name="Kikuchi H."/>
            <person name="Masuho Y."/>
            <person name="Yamashita R."/>
            <person name="Nakai K."/>
            <person name="Yada T."/>
            <person name="Nakamura Y."/>
            <person name="Ohara O."/>
            <person name="Isogai T."/>
            <person name="Sugano S."/>
        </authorList>
    </citation>
    <scope>NUCLEOTIDE SEQUENCE [LARGE SCALE MRNA] (ISOFORMS 1 AND 2)</scope>
    <source>
        <tissue>Hippocampus</tissue>
    </source>
</reference>
<reference key="4">
    <citation type="submission" date="2003-05" db="EMBL/GenBank/DDBJ databases">
        <title>Cloning of human full-length CDSs in BD Creator(TM) system donor vector.</title>
        <authorList>
            <person name="Kalnine N."/>
            <person name="Chen X."/>
            <person name="Rolfs A."/>
            <person name="Halleck A."/>
            <person name="Hines L."/>
            <person name="Eisenstein S."/>
            <person name="Koundinya M."/>
            <person name="Raphael J."/>
            <person name="Moreira D."/>
            <person name="Kelley T."/>
            <person name="LaBaer J."/>
            <person name="Lin Y."/>
            <person name="Phelan M."/>
            <person name="Farmer A."/>
        </authorList>
    </citation>
    <scope>NUCLEOTIDE SEQUENCE [LARGE SCALE MRNA] (ISOFORM 1)</scope>
</reference>
<reference key="5">
    <citation type="journal article" date="2006" name="Nature">
        <title>Human chromosome 11 DNA sequence and analysis including novel gene identification.</title>
        <authorList>
            <person name="Taylor T.D."/>
            <person name="Noguchi H."/>
            <person name="Totoki Y."/>
            <person name="Toyoda A."/>
            <person name="Kuroki Y."/>
            <person name="Dewar K."/>
            <person name="Lloyd C."/>
            <person name="Itoh T."/>
            <person name="Takeda T."/>
            <person name="Kim D.-W."/>
            <person name="She X."/>
            <person name="Barlow K.F."/>
            <person name="Bloom T."/>
            <person name="Bruford E."/>
            <person name="Chang J.L."/>
            <person name="Cuomo C.A."/>
            <person name="Eichler E."/>
            <person name="FitzGerald M.G."/>
            <person name="Jaffe D.B."/>
            <person name="LaButti K."/>
            <person name="Nicol R."/>
            <person name="Park H.-S."/>
            <person name="Seaman C."/>
            <person name="Sougnez C."/>
            <person name="Yang X."/>
            <person name="Zimmer A.R."/>
            <person name="Zody M.C."/>
            <person name="Birren B.W."/>
            <person name="Nusbaum C."/>
            <person name="Fujiyama A."/>
            <person name="Hattori M."/>
            <person name="Rogers J."/>
            <person name="Lander E.S."/>
            <person name="Sakaki Y."/>
        </authorList>
    </citation>
    <scope>NUCLEOTIDE SEQUENCE [LARGE SCALE GENOMIC DNA]</scope>
</reference>
<reference key="6">
    <citation type="submission" date="2005-07" db="EMBL/GenBank/DDBJ databases">
        <authorList>
            <person name="Mural R.J."/>
            <person name="Istrail S."/>
            <person name="Sutton G.G."/>
            <person name="Florea L."/>
            <person name="Halpern A.L."/>
            <person name="Mobarry C.M."/>
            <person name="Lippert R."/>
            <person name="Walenz B."/>
            <person name="Shatkay H."/>
            <person name="Dew I."/>
            <person name="Miller J.R."/>
            <person name="Flanigan M.J."/>
            <person name="Edwards N.J."/>
            <person name="Bolanos R."/>
            <person name="Fasulo D."/>
            <person name="Halldorsson B.V."/>
            <person name="Hannenhalli S."/>
            <person name="Turner R."/>
            <person name="Yooseph S."/>
            <person name="Lu F."/>
            <person name="Nusskern D.R."/>
            <person name="Shue B.C."/>
            <person name="Zheng X.H."/>
            <person name="Zhong F."/>
            <person name="Delcher A.L."/>
            <person name="Huson D.H."/>
            <person name="Kravitz S.A."/>
            <person name="Mouchard L."/>
            <person name="Reinert K."/>
            <person name="Remington K.A."/>
            <person name="Clark A.G."/>
            <person name="Waterman M.S."/>
            <person name="Eichler E.E."/>
            <person name="Adams M.D."/>
            <person name="Hunkapiller M.W."/>
            <person name="Myers E.W."/>
            <person name="Venter J.C."/>
        </authorList>
    </citation>
    <scope>NUCLEOTIDE SEQUENCE [LARGE SCALE GENOMIC DNA]</scope>
</reference>
<reference key="7">
    <citation type="journal article" date="2004" name="Genome Res.">
        <title>The status, quality, and expansion of the NIH full-length cDNA project: the Mammalian Gene Collection (MGC).</title>
        <authorList>
            <consortium name="The MGC Project Team"/>
        </authorList>
    </citation>
    <scope>NUCLEOTIDE SEQUENCE [LARGE SCALE MRNA] (ISOFORM 1)</scope>
    <source>
        <tissue>Duodenum</tissue>
        <tissue>Lung</tissue>
    </source>
</reference>
<reference key="8">
    <citation type="journal article" date="2003" name="Mol. Cell">
        <title>Oligosaccharyltransferase isoforms that contain different catalytic STT3 subunits have distinct enzymatic properties.</title>
        <authorList>
            <person name="Kelleher D.J."/>
            <person name="Karaoglu D."/>
            <person name="Mandon E.C."/>
            <person name="Gilmore R."/>
        </authorList>
    </citation>
    <scope>TISSUE SPECIFICITY</scope>
    <scope>SUBCELLULAR LOCATION</scope>
</reference>
<reference key="9">
    <citation type="journal article" date="2009" name="Cell">
        <title>Cotranslational and posttranslational N-glycosylation of polypeptides by distinct mammalian OST isoforms.</title>
        <authorList>
            <person name="Ruiz-Canada C."/>
            <person name="Kelleher D.J."/>
            <person name="Gilmore R."/>
        </authorList>
    </citation>
    <scope>FUNCTION</scope>
    <scope>CATALYTIC ACTIVITY</scope>
    <scope>PATHWAY</scope>
</reference>
<reference key="10">
    <citation type="journal article" date="2009" name="J. Proteome Res.">
        <title>Glycoproteomics analysis of human liver tissue by combination of multiple enzyme digestion and hydrazide chemistry.</title>
        <authorList>
            <person name="Chen R."/>
            <person name="Jiang X."/>
            <person name="Sun D."/>
            <person name="Han G."/>
            <person name="Wang F."/>
            <person name="Ye M."/>
            <person name="Wang L."/>
            <person name="Zou H."/>
        </authorList>
    </citation>
    <scope>GLYCOSYLATION [LARGE SCALE ANALYSIS] AT ASN-537; ASN-544 AND ASN-548</scope>
    <source>
        <tissue>Liver</tissue>
    </source>
</reference>
<reference key="11">
    <citation type="journal article" date="2011" name="BMC Syst. Biol.">
        <title>Initial characterization of the human central proteome.</title>
        <authorList>
            <person name="Burkard T.R."/>
            <person name="Planyavsky M."/>
            <person name="Kaupe I."/>
            <person name="Breitwieser F.P."/>
            <person name="Buerckstuemmer T."/>
            <person name="Bennett K.L."/>
            <person name="Superti-Furga G."/>
            <person name="Colinge J."/>
        </authorList>
    </citation>
    <scope>IDENTIFICATION BY MASS SPECTROMETRY [LARGE SCALE ANALYSIS]</scope>
</reference>
<reference key="12">
    <citation type="journal article" date="2012" name="Proc. Natl. Acad. Sci. U.S.A.">
        <title>N-terminal acetylome analyses and functional insights of the N-terminal acetyltransferase NatB.</title>
        <authorList>
            <person name="Van Damme P."/>
            <person name="Lasa M."/>
            <person name="Polevoda B."/>
            <person name="Gazquez C."/>
            <person name="Elosegui-Artola A."/>
            <person name="Kim D.S."/>
            <person name="De Juan-Pardo E."/>
            <person name="Demeyer K."/>
            <person name="Hole K."/>
            <person name="Larrea E."/>
            <person name="Timmerman E."/>
            <person name="Prieto J."/>
            <person name="Arnesen T."/>
            <person name="Sherman F."/>
            <person name="Gevaert K."/>
            <person name="Aldabe R."/>
        </authorList>
    </citation>
    <scope>IDENTIFICATION BY MASS SPECTROMETRY [LARGE SCALE ANALYSIS]</scope>
</reference>
<reference key="13">
    <citation type="journal article" date="2014" name="J. Cell Biol.">
        <title>Oxidoreductase activity is necessary for N-glycosylation of cysteine-proximal acceptor sites in glycoproteins.</title>
        <authorList>
            <person name="Cherepanova N.A."/>
            <person name="Shrimal S."/>
            <person name="Gilmore R."/>
        </authorList>
    </citation>
    <scope>IDENTIFICATION IN THE OLIGOSACCHARYLTRANSFERASE COMPLEX</scope>
</reference>
<reference key="14">
    <citation type="journal article" date="2013" name="J. Cell Sci.">
        <title>OST4 is a subunit of the mammalian oligosaccharyltransferase required for efficient N-glycosylation.</title>
        <authorList>
            <person name="Dumax-Vorzet A."/>
            <person name="Roboti P."/>
            <person name="High S."/>
        </authorList>
    </citation>
    <scope>IDENTIFICATION IN THE OLIGOSACCHARYLTRANSFERASE COMPLEX</scope>
</reference>
<reference key="15">
    <citation type="journal article" date="2014" name="J. Proteomics">
        <title>An enzyme assisted RP-RPLC approach for in-depth analysis of human liver phosphoproteome.</title>
        <authorList>
            <person name="Bian Y."/>
            <person name="Song C."/>
            <person name="Cheng K."/>
            <person name="Dong M."/>
            <person name="Wang F."/>
            <person name="Huang J."/>
            <person name="Sun D."/>
            <person name="Wang L."/>
            <person name="Ye M."/>
            <person name="Zou H."/>
        </authorList>
    </citation>
    <scope>IDENTIFICATION BY MASS SPECTROMETRY [LARGE SCALE ANALYSIS]</scope>
    <source>
        <tissue>Liver</tissue>
    </source>
</reference>
<reference key="16">
    <citation type="journal article" date="2015" name="Proteomics">
        <title>N-terminome analysis of the human mitochondrial proteome.</title>
        <authorList>
            <person name="Vaca Jacome A.S."/>
            <person name="Rabilloud T."/>
            <person name="Schaeffer-Reiss C."/>
            <person name="Rompais M."/>
            <person name="Ayoub D."/>
            <person name="Lane L."/>
            <person name="Bairoch A."/>
            <person name="Van Dorsselaer A."/>
            <person name="Carapito C."/>
        </authorList>
    </citation>
    <scope>IDENTIFICATION BY MASS SPECTROMETRY [LARGE SCALE ANALYSIS]</scope>
</reference>
<reference key="17">
    <citation type="journal article" date="2019" name="J. Cell Biol.">
        <title>Quantitative glycoproteomics reveals new classes of STT3A- and STT3B-dependent N-glycosylation sites.</title>
        <authorList>
            <person name="Cherepanova N.A."/>
            <person name="Venev S.V."/>
            <person name="Leszyk J.D."/>
            <person name="Shaffer S.A."/>
            <person name="Gilmore R."/>
        </authorList>
    </citation>
    <scope>FUNCTION</scope>
    <scope>CATALYTIC ACTIVITY</scope>
    <scope>PATHWAY</scope>
</reference>
<reference key="18">
    <citation type="journal article" date="2024" name="Science">
        <title>Regulated N-glycosylation controls chaperone function and receptor trafficking.</title>
        <authorList>
            <person name="Ma M."/>
            <person name="Dubey R."/>
            <person name="Jen A."/>
            <person name="Pusapati G.V."/>
            <person name="Singal B."/>
            <person name="Shishkova E."/>
            <person name="Overmyer K.A."/>
            <person name="Cormier-Daire V."/>
            <person name="Fedry J."/>
            <person name="Aravind L."/>
            <person name="Coon J.J."/>
            <person name="Rohatgi R."/>
        </authorList>
    </citation>
    <scope>FUNCTION</scope>
    <scope>CATALYTIC ACTIVITY</scope>
    <scope>PATHWAY</scope>
    <scope>MUTAGENESIS OF TRP-209; ARG-405; 525-TRP--ASP-527 AND TYR-530</scope>
</reference>
<reference evidence="25" key="19">
    <citation type="journal article" date="2019" name="Science">
        <title>Cryo-electron microscopy structures of human oligosaccharyltransferase complexes OST-A and OST-B.</title>
        <authorList>
            <person name="Ramirez A.S."/>
            <person name="Kowal J."/>
            <person name="Locher K.P."/>
        </authorList>
    </citation>
    <scope>STRUCTURE BY ELECTRON MICROSCOPY (3.50 ANGSTROMS)</scope>
    <scope>IDENTIFICATION OF OST COMPLEX</scope>
    <scope>FUNCTION</scope>
    <scope>PATHWAY</scope>
    <scope>COFACTOR</scope>
</reference>
<reference evidence="26" key="20">
    <citation type="journal article" date="2023" name="Nature">
        <title>Visualization of translation and protein biogenesis at the ER membrane.</title>
        <authorList>
            <person name="Gemmer M."/>
            <person name="Chaillet M.L."/>
            <person name="van Loenhout J."/>
            <person name="Cuevas Arenas R."/>
            <person name="Vismpas D."/>
            <person name="Grollers-Mulderij M."/>
            <person name="Koh F.A."/>
            <person name="Albanese P."/>
            <person name="Scheltema R.A."/>
            <person name="Howes S.C."/>
            <person name="Kotecha A."/>
            <person name="Fedry J."/>
            <person name="Forster F."/>
        </authorList>
    </citation>
    <scope>STRUCTURE BY ELECTRON MICROSCOPY (7.60 ANGSTROMS) OF THE STT3A-CONTAINING OLIGOSACCHARYLTRANSFERASE (OST) AND TRANSLOCON COMPLEXES</scope>
    <scope>SUBUNIT</scope>
</reference>
<reference evidence="27" key="21">
    <citation type="journal article" date="2024" name="Cell">
        <title>Positive selection CRISPR screens reveal a druggable pocket in an oligosaccharyltransferase required for inflammatory signaling to NF-kappaB.</title>
        <authorList>
            <person name="Lampson B.L."/>
            <person name="Ramrez A.S."/>
            <person name="Baro M."/>
            <person name="He L."/>
            <person name="Hegde M."/>
            <person name="Koduri V."/>
            <person name="Pfaff J.L."/>
            <person name="Hanna R.E."/>
            <person name="Kowal J."/>
            <person name="Shirole N.H."/>
            <person name="He Y."/>
            <person name="Doench J.G."/>
            <person name="Contessa J.N."/>
            <person name="Locher K.P."/>
            <person name="Kaelin W.G."/>
        </authorList>
    </citation>
    <scope>STRUCTURE BY ELECTRON MICROSCOPY (3.61 ANGSTROMS) OF THE STT3A-CONTAINING OLIGOSACCHARYLTRANSFERASE (OST)</scope>
    <scope>FUNCTION</scope>
    <scope>CATALYTIC ACTIVITY</scope>
    <scope>ACTIVITY REGULATION</scope>
    <scope>PATHWAY</scope>
    <scope>SUBUNIT</scope>
    <scope>MUTAGENESIS OF PHE-256; GLN-260; GLU-266 AND TYR-331</scope>
</reference>
<reference key="22">
    <citation type="journal article" date="2013" name="Hum. Mol. Genet.">
        <title>Mutations in STT3A and STT3B cause two congenital disorders of glycosylation.</title>
        <authorList>
            <person name="Shrimal S."/>
            <person name="Ng B.G."/>
            <person name="Losfeld M.E."/>
            <person name="Gilmore R."/>
            <person name="Freeze H.H."/>
        </authorList>
    </citation>
    <scope>VARIANT CDG1WAR ALA-626</scope>
    <scope>CHARACTERIZATION OF VARIANT CDG1WAR ALA-626</scope>
</reference>
<reference key="23">
    <citation type="journal article" date="2021" name="Am. J. Hum. Genet.">
        <title>Active site variants in STT3A cause a dominant type I congenital disorder of glycosylation with neuromusculoskeletal findings.</title>
        <authorList>
            <person name="Wilson M.P."/>
            <person name="Garanto A."/>
            <person name="Pinto e Vairo F."/>
            <person name="Ng B.G."/>
            <person name="Ranatunga W.K."/>
            <person name="Ventouratou M."/>
            <person name="Baerenfaenger M."/>
            <person name="Huijben K."/>
            <person name="Thiel C."/>
            <person name="Ashikov A."/>
            <person name="Keldermans L."/>
            <person name="Souche E."/>
            <person name="Vuillaumier-Barrot S."/>
            <person name="Dupre T."/>
            <person name="Michelakakis H."/>
            <person name="Fiumara A."/>
            <person name="Pitt J."/>
            <person name="White S.M."/>
            <person name="Lim S.C."/>
            <person name="Gallacher L."/>
            <person name="Peters H."/>
            <person name="Rymen D."/>
            <person name="Witters P."/>
            <person name="Ribes A."/>
            <person name="Morales-Romero B."/>
            <person name="Rodriguez-Palmero A."/>
            <person name="Ballhausen D."/>
            <person name="de Lonlay P."/>
            <person name="Barone R."/>
            <person name="Janssen M.C.H."/>
            <person name="Jaeken J."/>
            <person name="Freeze H.H."/>
            <person name="Matthijs G."/>
            <person name="Morava E."/>
            <person name="Lefeber D.J."/>
        </authorList>
    </citation>
    <scope>INVOLVEMENT IN CDG1WAD</scope>
    <scope>VARIANTS CDG1WAD ARG-46; GLN-160; CYS-329; CYS-405; HIS-405; SER-530 AND ILE-546</scope>
    <scope>CHARACTERIZATION OF VARIANTS CDG1WAD ARG-46; GLN-160; CYS-329; CYS-405; SER-530 AND ILE-546</scope>
    <scope>FUNCTION</scope>
</reference>
<name>STT3A_HUMAN</name>
<proteinExistence type="evidence at protein level"/>
<feature type="chain" id="PRO_0000072290" description="Dolichyl-diphosphooligosaccharide--protein glycosyltransferase subunit STT3A">
    <location>
        <begin position="1"/>
        <end position="705"/>
    </location>
</feature>
<feature type="topological domain" description="Cytoplasmic" evidence="23">
    <location>
        <begin position="1"/>
        <end position="17"/>
    </location>
</feature>
<feature type="transmembrane region" description="Helical" evidence="6">
    <location>
        <begin position="18"/>
        <end position="38"/>
    </location>
</feature>
<feature type="topological domain" description="Lumenal" evidence="23">
    <location>
        <begin position="39"/>
        <end position="119"/>
    </location>
</feature>
<feature type="transmembrane region" description="Helical" evidence="3">
    <location>
        <begin position="120"/>
        <end position="138"/>
    </location>
</feature>
<feature type="topological domain" description="Cytoplasmic" evidence="23">
    <location>
        <begin position="139"/>
        <end position="140"/>
    </location>
</feature>
<feature type="transmembrane region" description="Helical" evidence="3">
    <location>
        <begin position="141"/>
        <end position="158"/>
    </location>
</feature>
<feature type="topological domain" description="Lumenal" evidence="23">
    <location>
        <begin position="159"/>
        <end position="169"/>
    </location>
</feature>
<feature type="transmembrane region" description="Helical" evidence="3">
    <location>
        <begin position="170"/>
        <end position="189"/>
    </location>
</feature>
<feature type="topological domain" description="Cytoplasmic" evidence="23">
    <location>
        <begin position="190"/>
        <end position="191"/>
    </location>
</feature>
<feature type="transmembrane region" description="Helical" evidence="3">
    <location>
        <begin position="192"/>
        <end position="206"/>
    </location>
</feature>
<feature type="topological domain" description="Lumenal" evidence="23">
    <location>
        <begin position="207"/>
        <end position="211"/>
    </location>
</feature>
<feature type="transmembrane region" description="Helical" evidence="3">
    <location>
        <begin position="212"/>
        <end position="228"/>
    </location>
</feature>
<feature type="topological domain" description="Cytoplasmic" evidence="23">
    <location>
        <begin position="229"/>
        <end position="233"/>
    </location>
</feature>
<feature type="transmembrane region" description="Helical" evidence="3">
    <location>
        <begin position="234"/>
        <end position="259"/>
    </location>
</feature>
<feature type="topological domain" description="Lumenal" evidence="23">
    <location>
        <begin position="260"/>
        <end position="267"/>
    </location>
</feature>
<feature type="transmembrane region" description="Helical" evidence="3">
    <location>
        <begin position="268"/>
        <end position="287"/>
    </location>
</feature>
<feature type="topological domain" description="Cytoplasmic" evidence="23">
    <location>
        <begin position="288"/>
        <end position="300"/>
    </location>
</feature>
<feature type="transmembrane region" description="Helical" evidence="6">
    <location>
        <begin position="301"/>
        <end position="321"/>
    </location>
</feature>
<feature type="topological domain" description="Lumenal" evidence="23">
    <location>
        <begin position="322"/>
        <end position="356"/>
    </location>
</feature>
<feature type="transmembrane region" description="Helical" evidence="3">
    <location>
        <begin position="357"/>
        <end position="379"/>
    </location>
</feature>
<feature type="topological domain" description="Cytoplasmic" evidence="23">
    <location>
        <begin position="380"/>
        <end position="385"/>
    </location>
</feature>
<feature type="transmembrane region" description="Helical" evidence="3">
    <location>
        <begin position="386"/>
        <end position="402"/>
    </location>
</feature>
<feature type="topological domain" description="Lumenal" evidence="23">
    <location>
        <begin position="403"/>
        <end position="406"/>
    </location>
</feature>
<feature type="transmembrane region" description="Helical" evidence="3">
    <location>
        <begin position="407"/>
        <end position="428"/>
    </location>
</feature>
<feature type="topological domain" description="Cytoplasmic" evidence="23">
    <location>
        <begin position="429"/>
        <end position="453"/>
    </location>
</feature>
<feature type="transmembrane region" description="Helical" evidence="3">
    <location>
        <begin position="454"/>
        <end position="473"/>
    </location>
</feature>
<feature type="topological domain" description="Lumenal" evidence="23">
    <location>
        <begin position="474"/>
        <end position="705"/>
    </location>
</feature>
<feature type="region of interest" description="Interacts with target acceptor peptide in protein substrate" evidence="1">
    <location>
        <begin position="525"/>
        <end position="527"/>
    </location>
</feature>
<feature type="short sequence motif" description="DXD motif 1" evidence="5">
    <location>
        <begin position="47"/>
        <end position="49"/>
    </location>
</feature>
<feature type="short sequence motif" description="DXD motif 2" evidence="3">
    <location>
        <begin position="167"/>
        <end position="169"/>
    </location>
</feature>
<feature type="short sequence motif" description="SVSE motif" evidence="5">
    <location>
        <begin position="348"/>
        <end position="351"/>
    </location>
</feature>
<feature type="short sequence motif" description="WWDYG motif" evidence="3">
    <location>
        <begin position="525"/>
        <end position="529"/>
    </location>
</feature>
<feature type="short sequence motif" description="DK motif" evidence="3">
    <location>
        <begin position="592"/>
        <end position="599"/>
    </location>
</feature>
<feature type="binding site" evidence="1">
    <location>
        <position position="49"/>
    </location>
    <ligand>
        <name>Mn(2+)</name>
        <dbReference type="ChEBI" id="CHEBI:29035"/>
    </ligand>
</feature>
<feature type="binding site" evidence="1">
    <location>
        <position position="167"/>
    </location>
    <ligand>
        <name>Mn(2+)</name>
        <dbReference type="ChEBI" id="CHEBI:29035"/>
    </ligand>
</feature>
<feature type="binding site" evidence="1">
    <location>
        <position position="169"/>
    </location>
    <ligand>
        <name>Mn(2+)</name>
        <dbReference type="ChEBI" id="CHEBI:29035"/>
    </ligand>
</feature>
<feature type="binding site" evidence="1">
    <location>
        <position position="405"/>
    </location>
    <ligand>
        <name>dolichyl diphosphooligosaccharide</name>
        <dbReference type="ChEBI" id="CHEBI:57570"/>
    </ligand>
</feature>
<feature type="binding site" evidence="1">
    <location>
        <position position="530"/>
    </location>
    <ligand>
        <name>dolichyl diphosphooligosaccharide</name>
        <dbReference type="ChEBI" id="CHEBI:57570"/>
    </ligand>
</feature>
<feature type="site" description="Interacts with target acceptor peptide in protein substrate" evidence="1">
    <location>
        <position position="49"/>
    </location>
</feature>
<feature type="site" description="Important for catalytic activity" evidence="1">
    <location>
        <position position="160"/>
    </location>
</feature>
<feature type="site" description="Interacts with target acceptor peptide in protein substrate" evidence="1">
    <location>
        <position position="351"/>
    </location>
</feature>
<feature type="site" description="Interacts with target acceptor peptide in protein substrate" evidence="1">
    <location>
        <position position="595"/>
    </location>
</feature>
<feature type="glycosylation site" description="N-linked (GlcNAc...) asparagine" evidence="8">
    <location>
        <position position="537"/>
    </location>
</feature>
<feature type="glycosylation site" description="N-linked (GlcNAc...) asparagine" evidence="8">
    <location>
        <position position="544"/>
    </location>
</feature>
<feature type="glycosylation site" description="N-linked (GlcNAc...) (high mannose) asparagine" evidence="8">
    <location>
        <position position="548"/>
    </location>
</feature>
<feature type="splice variant" id="VSP_055106" description="In isoform 2." evidence="19">
    <location>
        <begin position="1"/>
        <end position="92"/>
    </location>
</feature>
<feature type="sequence variant" id="VAR_086762" description="In CDG1WAD; partial loss of function, when tested in a heterologous system; does not affect expression levels." evidence="15">
    <original>H</original>
    <variation>R</variation>
    <location>
        <position position="46"/>
    </location>
</feature>
<feature type="sequence variant" id="VAR_086763" description="In CDG1WAD; partial loss of function, when tested in a heterologous system; does not affect expression levels." evidence="15">
    <original>R</original>
    <variation>Q</variation>
    <location>
        <position position="160"/>
    </location>
</feature>
<feature type="sequence variant" id="VAR_086764" description="In CDG1WAD; uncertain significance; partial loss of function, when tested in a heterologous system." evidence="15">
    <original>R</original>
    <variation>C</variation>
    <location>
        <position position="329"/>
    </location>
</feature>
<feature type="sequence variant" id="VAR_086765" description="In CDG1WAD; partial loss of function, when tested in a heterologous system; does not affect expression levels." evidence="15">
    <original>R</original>
    <variation>C</variation>
    <location>
        <position position="405"/>
    </location>
</feature>
<feature type="sequence variant" id="VAR_086766" description="In CDG1WAD." evidence="15">
    <original>R</original>
    <variation>H</variation>
    <location>
        <position position="405"/>
    </location>
</feature>
<feature type="sequence variant" id="VAR_086767" description="In CDG1WAD; uncertain significance; partial loss of function, when tested in a heterologous system; does not affect expression levels." evidence="15">
    <original>Y</original>
    <variation>S</variation>
    <location>
        <position position="530"/>
    </location>
</feature>
<feature type="sequence variant" id="VAR_086768" description="In CDG1WAD; uncertain significance; partial loss of function, when tested in a heterologous system; does not affect expression levels." evidence="15">
    <original>T</original>
    <variation>I</variation>
    <location>
        <position position="546"/>
    </location>
</feature>
<feature type="sequence variant" id="VAR_070944" description="In CDG1WAR; affects activity resulting in hypoglycosylation of STT3A-specific substrates; dbSNP:rs587777216." evidence="11">
    <original>V</original>
    <variation>A</variation>
    <location>
        <position position="626"/>
    </location>
</feature>
<feature type="mutagenesis site" description="In LLO mutant; abolished oligosaccharyl transferase activity due to defects in binding lipid-linked oligosaccharide; when associated with A-405 and A-530." evidence="18">
    <original>W</original>
    <variation>F</variation>
    <location>
        <position position="209"/>
    </location>
</feature>
<feature type="mutagenesis site" description="Confers resistance to inhibitor N-glycosylation inhibitor NGI-1." evidence="17">
    <original>F</original>
    <variation>P</variation>
    <location>
        <position position="256"/>
    </location>
</feature>
<feature type="mutagenesis site" description="Confers resistance to inhibitor N-glycosylation inhibitor NGI-1." evidence="17">
    <original>Q</original>
    <variation>R</variation>
    <location>
        <position position="260"/>
    </location>
</feature>
<feature type="mutagenesis site" description="Confers resistance to inhibitor N-glycosylation inhibitor NGI-1." evidence="17">
    <original>E</original>
    <variation>K</variation>
    <location>
        <position position="266"/>
    </location>
</feature>
<feature type="mutagenesis site" description="Confers resistance to inhibitor N-glycosylation inhibitor NGI-1." evidence="17">
    <original>Y</original>
    <variation>H</variation>
    <location>
        <position position="331"/>
    </location>
</feature>
<feature type="mutagenesis site" description="In LLO mutant; abolished oligosaccharyl transferase activity due to defects in binding lipid-linked oligosaccharide; when associated with F-209 and A-530." evidence="18">
    <original>R</original>
    <variation>A</variation>
    <location>
        <position position="405"/>
    </location>
</feature>
<feature type="mutagenesis site" description="Impaired ability to prevent hyperglycosylation of target proteins." evidence="18">
    <original>WWD</original>
    <variation>AAA</variation>
    <location>
        <begin position="525"/>
        <end position="527"/>
    </location>
</feature>
<feature type="mutagenesis site" description="In LLO mutant; abolished oligosaccharyl transferase activity due to defects in binding lipid-linked oligosaccharide; when associated with F-209 and A-405." evidence="18">
    <original>Y</original>
    <variation>A</variation>
    <location>
        <position position="530"/>
    </location>
</feature>
<feature type="sequence conflict" description="In Ref. 2; AAL77539." evidence="23" ref="2">
    <original>A</original>
    <variation>S</variation>
    <location>
        <position position="61"/>
    </location>
</feature>
<feature type="sequence conflict" description="In Ref. 3; BAG58686." evidence="23" ref="3">
    <original>V</original>
    <variation>M</variation>
    <location>
        <position position="117"/>
    </location>
</feature>
<feature type="sequence conflict" description="In Ref. 1; AAB05994." evidence="23" ref="1">
    <original>T</original>
    <variation>S</variation>
    <location>
        <position position="128"/>
    </location>
</feature>
<feature type="sequence conflict" description="In Ref. 1; AAB05994." evidence="23" ref="1">
    <original>H</original>
    <variation>L</variation>
    <location>
        <position position="133"/>
    </location>
</feature>
<feature type="sequence conflict" description="In Ref. 1; AAB05994." evidence="23" ref="1">
    <original>M</original>
    <variation>R</variation>
    <location>
        <position position="252"/>
    </location>
</feature>
<feature type="sequence conflict" description="In Ref. 1; AAB05994." evidence="23" ref="1">
    <original>A</original>
    <variation>G</variation>
    <location>
        <position position="270"/>
    </location>
</feature>
<feature type="sequence conflict" description="In Ref. 1; AAB05994." evidence="23" ref="1">
    <original>C</original>
    <variation>S</variation>
    <location>
        <position position="415"/>
    </location>
</feature>
<feature type="sequence conflict" description="In Ref. 1; AAB05994." evidence="23" ref="1">
    <original>N</original>
    <variation>I</variation>
    <location>
        <position position="454"/>
    </location>
</feature>
<feature type="sequence conflict" description="In Ref. 2; AAL77539." evidence="23" ref="2">
    <original>G</original>
    <variation>D</variation>
    <location>
        <position position="494"/>
    </location>
</feature>
<feature type="sequence conflict" description="In Ref. 1; AAB05994." evidence="23" ref="1">
    <original>A</original>
    <variation>G</variation>
    <location>
        <position position="681"/>
    </location>
</feature>
<feature type="helix" evidence="28">
    <location>
        <begin position="11"/>
        <end position="34"/>
    </location>
</feature>
<feature type="helix" evidence="28">
    <location>
        <begin position="37"/>
        <end position="40"/>
    </location>
</feature>
<feature type="strand" evidence="28">
    <location>
        <begin position="47"/>
        <end position="49"/>
    </location>
</feature>
<feature type="helix" evidence="28">
    <location>
        <begin position="50"/>
        <end position="63"/>
    </location>
</feature>
<feature type="helix" evidence="28">
    <location>
        <begin position="66"/>
        <end position="69"/>
    </location>
</feature>
<feature type="strand" evidence="28">
    <location>
        <begin position="75"/>
        <end position="77"/>
    </location>
</feature>
<feature type="helix" evidence="28">
    <location>
        <begin position="84"/>
        <end position="87"/>
    </location>
</feature>
<feature type="helix" evidence="28">
    <location>
        <begin position="91"/>
        <end position="105"/>
    </location>
</feature>
<feature type="helix" evidence="28">
    <location>
        <begin position="112"/>
        <end position="117"/>
    </location>
</feature>
<feature type="helix" evidence="28">
    <location>
        <begin position="119"/>
        <end position="138"/>
    </location>
</feature>
<feature type="helix" evidence="28">
    <location>
        <begin position="141"/>
        <end position="152"/>
    </location>
</feature>
<feature type="helix" evidence="28">
    <location>
        <begin position="155"/>
        <end position="159"/>
    </location>
</feature>
<feature type="helix" evidence="28">
    <location>
        <begin position="169"/>
        <end position="189"/>
    </location>
</feature>
<feature type="helix" evidence="28">
    <location>
        <begin position="192"/>
        <end position="208"/>
    </location>
</feature>
<feature type="helix" evidence="28">
    <location>
        <begin position="212"/>
        <end position="215"/>
    </location>
</feature>
<feature type="turn" evidence="28">
    <location>
        <begin position="216"/>
        <end position="218"/>
    </location>
</feature>
<feature type="helix" evidence="28">
    <location>
        <begin position="219"/>
        <end position="229"/>
    </location>
</feature>
<feature type="helix" evidence="28">
    <location>
        <begin position="234"/>
        <end position="252"/>
    </location>
</feature>
<feature type="strand" evidence="28">
    <location>
        <begin position="253"/>
        <end position="257"/>
    </location>
</feature>
<feature type="helix" evidence="28">
    <location>
        <begin position="260"/>
        <end position="263"/>
    </location>
</feature>
<feature type="helix" evidence="28">
    <location>
        <begin position="268"/>
        <end position="289"/>
    </location>
</feature>
<feature type="helix" evidence="28">
    <location>
        <begin position="292"/>
        <end position="298"/>
    </location>
</feature>
<feature type="helix" evidence="28">
    <location>
        <begin position="331"/>
        <end position="334"/>
    </location>
</feature>
<feature type="helix" evidence="28">
    <location>
        <begin position="338"/>
        <end position="341"/>
    </location>
</feature>
<feature type="turn" evidence="28">
    <location>
        <begin position="344"/>
        <end position="348"/>
    </location>
</feature>
<feature type="helix" evidence="28">
    <location>
        <begin position="350"/>
        <end position="352"/>
    </location>
</feature>
<feature type="helix" evidence="28">
    <location>
        <begin position="357"/>
        <end position="363"/>
    </location>
</feature>
<feature type="strand" evidence="28">
    <location>
        <begin position="365"/>
        <end position="367"/>
    </location>
</feature>
<feature type="helix" evidence="28">
    <location>
        <begin position="368"/>
        <end position="370"/>
    </location>
</feature>
<feature type="helix" evidence="28">
    <location>
        <begin position="371"/>
        <end position="380"/>
    </location>
</feature>
<feature type="helix" evidence="28">
    <location>
        <begin position="386"/>
        <end position="402"/>
    </location>
</feature>
<feature type="helix" evidence="28">
    <location>
        <begin position="405"/>
        <end position="410"/>
    </location>
</feature>
<feature type="helix" evidence="28">
    <location>
        <begin position="411"/>
        <end position="429"/>
    </location>
</feature>
<feature type="turn" evidence="28">
    <location>
        <begin position="430"/>
        <end position="432"/>
    </location>
</feature>
<feature type="strand" evidence="28">
    <location>
        <begin position="433"/>
        <end position="435"/>
    </location>
</feature>
<feature type="helix" evidence="28">
    <location>
        <begin position="455"/>
        <end position="481"/>
    </location>
</feature>
<feature type="strand" evidence="28">
    <location>
        <begin position="487"/>
        <end position="491"/>
    </location>
</feature>
<feature type="helix" evidence="28">
    <location>
        <begin position="504"/>
        <end position="514"/>
    </location>
</feature>
<feature type="strand" evidence="28">
    <location>
        <begin position="521"/>
        <end position="523"/>
    </location>
</feature>
<feature type="helix" evidence="28">
    <location>
        <begin position="530"/>
        <end position="535"/>
    </location>
</feature>
<feature type="strand" evidence="28">
    <location>
        <begin position="539"/>
        <end position="541"/>
    </location>
</feature>
<feature type="helix" evidence="28">
    <location>
        <begin position="549"/>
        <end position="560"/>
    </location>
</feature>
<feature type="helix" evidence="28">
    <location>
        <begin position="563"/>
        <end position="573"/>
    </location>
</feature>
<feature type="strand" evidence="28">
    <location>
        <begin position="577"/>
        <end position="581"/>
    </location>
</feature>
<feature type="turn" evidence="28">
    <location>
        <begin position="584"/>
        <end position="587"/>
    </location>
</feature>
<feature type="turn" evidence="28">
    <location>
        <begin position="592"/>
        <end position="595"/>
    </location>
</feature>
<feature type="helix" evidence="28">
    <location>
        <begin position="596"/>
        <end position="603"/>
    </location>
</feature>
<feature type="strand" evidence="28">
    <location>
        <begin position="606"/>
        <end position="608"/>
    </location>
</feature>
<feature type="turn" evidence="28">
    <location>
        <begin position="610"/>
        <end position="612"/>
    </location>
</feature>
<feature type="helix" evidence="28">
    <location>
        <begin position="614"/>
        <end position="616"/>
    </location>
</feature>
<feature type="turn" evidence="28">
    <location>
        <begin position="632"/>
        <end position="636"/>
    </location>
</feature>
<feature type="helix" evidence="28">
    <location>
        <begin position="638"/>
        <end position="641"/>
    </location>
</feature>
<feature type="strand" evidence="28">
    <location>
        <begin position="653"/>
        <end position="656"/>
    </location>
</feature>
<feature type="strand" evidence="28">
    <location>
        <begin position="658"/>
        <end position="661"/>
    </location>
</feature>
<feature type="turn" evidence="28">
    <location>
        <begin position="662"/>
        <end position="665"/>
    </location>
</feature>
<feature type="strand" evidence="28">
    <location>
        <begin position="676"/>
        <end position="683"/>
    </location>
</feature>
<feature type="strand" evidence="28">
    <location>
        <begin position="689"/>
        <end position="694"/>
    </location>
</feature>
<gene>
    <name evidence="20 24" type="primary">STT3A</name>
    <name evidence="22" type="synonym">ITM1</name>
    <name evidence="21" type="synonym">TMC</name>
</gene>
<protein>
    <recommendedName>
        <fullName evidence="23">Dolichyl-diphosphooligosaccharide--protein glycosyltransferase subunit STT3A</fullName>
        <shortName>Oligosaccharyl transferase subunit STT3A</shortName>
        <shortName>STT3-A</shortName>
        <ecNumber evidence="9 13 18">2.4.99.18</ecNumber>
    </recommendedName>
    <alternativeName>
        <fullName>B5</fullName>
    </alternativeName>
    <alternativeName>
        <fullName evidence="22">Integral membrane protein 1</fullName>
    </alternativeName>
    <alternativeName>
        <fullName evidence="21">Transmembrane protein TMC</fullName>
    </alternativeName>
</protein>
<organism>
    <name type="scientific">Homo sapiens</name>
    <name type="common">Human</name>
    <dbReference type="NCBI Taxonomy" id="9606"/>
    <lineage>
        <taxon>Eukaryota</taxon>
        <taxon>Metazoa</taxon>
        <taxon>Chordata</taxon>
        <taxon>Craniata</taxon>
        <taxon>Vertebrata</taxon>
        <taxon>Euteleostomi</taxon>
        <taxon>Mammalia</taxon>
        <taxon>Eutheria</taxon>
        <taxon>Euarchontoglires</taxon>
        <taxon>Primates</taxon>
        <taxon>Haplorrhini</taxon>
        <taxon>Catarrhini</taxon>
        <taxon>Hominidae</taxon>
        <taxon>Homo</taxon>
    </lineage>
</organism>
<sequence length="705" mass="80530">MTKFGFLRLSYEKQDTLLKLLILSMAAVLSFSTRLFAVLRFESVIHEFDPYFNYRTTRFLAEEGFYKFHNWFDDRAWYPLGRIIGGTIYPGLMITSAAIYHVLHFFHITIDIRNVCVFLAPLFSSFTTIVTYHLTKELKDAGAGLLAAAMIAVVPGYISRSVAGSYDNEGIAIFCMLLTYYMWIKAVKTGSICWAAKCALAYFYMVSSWGGYVFLINLIPLHVLVLMLTGRFSHRIYVAYCTVYCLGTILSMQISFVGFQPVLSSEHMAAFGVFGLCQIHAFVDYLRSKLNPQQFEVLFRSVISLVGFVLLTVGALLMLTGKISPWTGRFYSLLDPSYAKNNIPIIASVSEHQPTTWSSYYFDLQLLVFMFPVGLYYCFSNLSDARIFIIMYGVTSMYFSAVMVRLMLVLAPVMCILSGIGVSQVLSTYMKNLDISRPDKKSKKQQDSTYPIKNEVASGMILVMAFFLITYTFHSTWVTSEAYSSPSIVLSARGGDGSRIIFDDFREAYYWLRHNTPEDAKVMSWWDYGYQITAMANRTILVDNNTWNNTHISRVGQAMASTEEKAYEIMRELDVSYVLVIFGGLTGYSSDDINKFLWMVRIGGSTDTGKHIKENDYYTPTGEFRVDREGSPVLLNCLMYKMCYYRFGQVYTEAKRPPGFDRVRNAEIGNKDFELDVLEEAYTTEHWLVRIYKVKDLDNRGLSRT</sequence>
<comment type="function">
    <text evidence="9 13 14 15 17 18">Catalytic subunit of the oligosaccharyl transferase (OST) complex that catalyzes the initial transfer of a defined glycan (Glc(3)Man(9)GlcNAc(2) in eukaryotes) from the lipid carrier dolichol-pyrophosphate to an asparagine residue within an Asn-X-Ser/Thr consensus motif in nascent polypeptide chains, the first step in protein N-glycosylation (PubMed:19167329, PubMed:31296534, PubMed:31831667, PubMed:34653363, PubMed:38670073, PubMed:39509507). N-glycosylation occurs cotranslationally and the complex associates with the Sec61 complex at the channel-forming translocon complex that mediates protein translocation across the endoplasmic reticulum (ER) (PubMed:19167329, PubMed:31296534, PubMed:31831667, PubMed:34653363, PubMed:38670073, PubMed:39509507). All subunits are required for a maximal enzyme activity (PubMed:19167329, PubMed:31831667, PubMed:34653363). This subunit contains the active site and the acceptor peptide and donor lipid-linked oligosaccharide (LLO) binding pockets (PubMed:19167329). STT3A is present in the majority of OST complexes and mediates cotranslational N-glycosylation of most sites on target proteins, while STT3B-containing complexes are required for efficient post-translational glycosylation and mediate glycosylation of sites that have been skipped by STT3A (PubMed:19167329, PubMed:38670073, PubMed:39509507). STT3A-containing OST-A complex is also required to prevent hyperglycosylation of some target proteins by preventing glycosylation of facultative sites before folding of target proteins is completed (PubMed:39509507).</text>
</comment>
<comment type="catalytic activity">
    <reaction evidence="9 13 17 18">
        <text>a di-trans,poly-cis-dolichyl diphosphooligosaccharide + L-asparaginyl-[protein] = N(4)-(oligosaccharide-(1-&gt;4)-N-acetyl-beta-D-glucosaminyl-(1-&gt;4)-N-acetyl-beta-D-glucosaminyl)-L-asparaginyl-[protein] + a di-trans,poly-cis-dolichyl diphosphate + H(+)</text>
        <dbReference type="Rhea" id="RHEA:22980"/>
        <dbReference type="Rhea" id="RHEA-COMP:12804"/>
        <dbReference type="Rhea" id="RHEA-COMP:12805"/>
        <dbReference type="Rhea" id="RHEA-COMP:19506"/>
        <dbReference type="Rhea" id="RHEA-COMP:19509"/>
        <dbReference type="ChEBI" id="CHEBI:15378"/>
        <dbReference type="ChEBI" id="CHEBI:50347"/>
        <dbReference type="ChEBI" id="CHEBI:57497"/>
        <dbReference type="ChEBI" id="CHEBI:57570"/>
        <dbReference type="ChEBI" id="CHEBI:132529"/>
        <dbReference type="EC" id="2.4.99.18"/>
    </reaction>
</comment>
<comment type="cofactor">
    <cofactor evidence="14">
        <name>Mg(2+)</name>
        <dbReference type="ChEBI" id="CHEBI:18420"/>
    </cofactor>
    <cofactor evidence="1">
        <name>Mn(2+)</name>
        <dbReference type="ChEBI" id="CHEBI:29035"/>
    </cofactor>
</comment>
<comment type="activity regulation">
    <text evidence="17">STT3A, but not STT3B, is specifically inhibited by the N-glycosylation inhibitor NGI-235, which prevents productive binding pose of the glycan donor in the active site of STT3A.</text>
</comment>
<comment type="pathway">
    <text evidence="9 14 17 18">Protein modification; protein glycosylation.</text>
</comment>
<comment type="subunit">
    <text evidence="2 10 12 14 16 17">Component of the oligosaccharyltransferase (OST) complex (PubMed:23606741, PubMed:25135935, PubMed:31831667, PubMed:36697828, PubMed:38670073). There are 2 OST complexes, OST-A and OST-B, which contain STT3A or STT3B as catalytic subunit, respectively (PubMed:23606741, PubMed:25135935, PubMed:31831667, PubMed:38670073). OST-A and OST-B contain common core subunits RPN1, RPN2, OST48, OST4, DAD1 and TMEM258, and OST-A contains DC2/OSTC and KRTCAP2/KCP2 specific accessory subunits (PubMed:23606741, PubMed:25135935, PubMed:31831667, PubMed:36697828, PubMed:38670073). OST-A complex assembly occurs through the formation of 3 subcomplexes (By similarity). Subcomplex 1 contains RPN1 and TMEM258, subcomplex 2 contains the OST-A-specific subunits STT3A, DC2/OSTC, and KCP2 as well as the core subunit OST4, and subcomplex 3 contains RPN2, DAD1, and OST48 (By similarity). The OST-A complex can form stable complexes with the Sec61 complex or with both the Sec61 and TRAP complexes (By similarity).</text>
</comment>
<comment type="interaction">
    <interactant intactId="EBI-719212">
        <id>P46977</id>
    </interactant>
    <interactant intactId="EBI-447733">
        <id>O43187</id>
        <label>IRAK2</label>
    </interactant>
    <organismsDiffer>false</organismsDiffer>
    <experiments>2</experiments>
</comment>
<comment type="interaction">
    <interactant intactId="EBI-719212">
        <id>P46977</id>
    </interactant>
    <interactant intactId="EBI-716404">
        <id>P16284</id>
        <label>PECAM1</label>
    </interactant>
    <organismsDiffer>false</organismsDiffer>
    <experiments>3</experiments>
</comment>
<comment type="interaction">
    <interactant intactId="EBI-719212">
        <id>P46977</id>
    </interactant>
    <interactant intactId="EBI-11337900">
        <id>Q9H5K3</id>
        <label>POMK</label>
    </interactant>
    <organismsDiffer>false</organismsDiffer>
    <experiments>2</experiments>
</comment>
<comment type="interaction">
    <interactant intactId="EBI-719212">
        <id>P46977</id>
    </interactant>
    <interactant intactId="EBI-355963">
        <id>P04843</id>
        <label>RPN1</label>
    </interactant>
    <organismsDiffer>false</organismsDiffer>
    <experiments>3</experiments>
</comment>
<comment type="interaction">
    <interactant intactId="EBI-719212">
        <id>P46977</id>
    </interactant>
    <interactant intactId="EBI-2800345">
        <id>Q86WV6</id>
        <label>STING1</label>
    </interactant>
    <organismsDiffer>false</organismsDiffer>
    <experiments>2</experiments>
</comment>
<comment type="interaction">
    <interactant intactId="EBI-719212">
        <id>P46977</id>
    </interactant>
    <interactant intactId="EBI-296151">
        <id>P37173</id>
        <label>TGFBR2</label>
    </interactant>
    <organismsDiffer>false</organismsDiffer>
    <experiments>3</experiments>
</comment>
<comment type="interaction">
    <interactant intactId="EBI-719212">
        <id>P46977</id>
    </interactant>
    <interactant intactId="EBI-355164">
        <id>P55072</id>
        <label>VCP</label>
    </interactant>
    <organismsDiffer>false</organismsDiffer>
    <experiments>3</experiments>
</comment>
<comment type="interaction">
    <interactant intactId="EBI-719212">
        <id>P46977</id>
    </interactant>
    <interactant intactId="EBI-720609">
        <id>O76024</id>
        <label>WFS1</label>
    </interactant>
    <organismsDiffer>false</organismsDiffer>
    <experiments>3</experiments>
</comment>
<comment type="interaction">
    <interactant intactId="EBI-719212">
        <id>P46977</id>
    </interactant>
    <interactant intactId="EBI-25475914">
        <id>P0DTD8</id>
        <label>7b</label>
    </interactant>
    <organismsDiffer>true</organismsDiffer>
    <experiments>3</experiments>
</comment>
<comment type="interaction">
    <interactant intactId="EBI-719212">
        <id>P46977</id>
    </interactant>
    <interactant intactId="EBI-6117196">
        <id>Q6PDS3</id>
        <label>Sarm1</label>
    </interactant>
    <organismsDiffer>true</organismsDiffer>
    <experiments>2</experiments>
</comment>
<comment type="subcellular location">
    <subcellularLocation>
        <location evidence="7">Endoplasmic reticulum</location>
    </subcellularLocation>
    <subcellularLocation>
        <location evidence="4">Endoplasmic reticulum membrane</location>
        <topology evidence="4">Multi-pass membrane protein</topology>
    </subcellularLocation>
</comment>
<comment type="alternative products">
    <event type="alternative splicing"/>
    <isoform>
        <id>P46977-1</id>
        <name>1</name>
        <sequence type="displayed"/>
    </isoform>
    <isoform>
        <id>P46977-2</id>
        <name>2</name>
        <sequence type="described" ref="VSP_055106"/>
    </isoform>
</comment>
<comment type="tissue specificity">
    <text evidence="7">Expressed at high levels in placenta, liver, muscle and pancreas, and at very low levels in brain, lung and kidney. Expressed in skin fibroblasts (at protein level).</text>
</comment>
<comment type="domain">
    <text evidence="3">Despite low primary sequence conservation between eukaryotic catalytic subunits and bacterial and archaeal single subunit OSTs (ssOST), structural comparison revealed several common motifs at spatially equivalent positions, like the DXD motif 1 on the external loop 1 and the DXD motif 2 on the external loop 2 involved in binding of the metal ion cofactor and the carboxamide group of the acceptor asparagine, the conserved Glu residue of the TIXE/SVSE motif on the external loop 5 involved in catalysis, as well as the WWDYG and the DK/MI motifs in the globular domain that define the binding pocket for the +2 Ser/Thr of the acceptor sequon. In bacterial ssOSTs, an Arg residue was found to interact with a negatively charged side chain at the -2 position of the sequon. This Arg is conserved in bacterial enzymes and correlates with an extended sequon requirement (Asp-X-Asn-X-Ser/Thr) for bacterial N-glycosylation.</text>
</comment>
<comment type="disease" evidence="11">
    <disease id="DI-04006">
        <name>Congenital disorder of glycosylation 1W, autosomal recessive</name>
        <acronym>CDG1WAR</acronym>
        <description>A form of congenital disorder of glycosylation, a multisystem disorder caused by a defect in glycoprotein biosynthesis and characterized by under-glycosylated serum glycoproteins. Congenital disorders of glycosylation result in a wide variety of clinical features, such as defects in the nervous system development, psychomotor retardation, dysmorphic features, hypotonia, coagulation disorders, and immunodeficiency. The broad spectrum of features reflects the critical role of N-glycoproteins during embryonic development, differentiation, and maintenance of cell functions.</description>
        <dbReference type="MIM" id="615596"/>
    </disease>
    <text>The disease is caused by variants affecting the gene represented in this entry.</text>
</comment>
<comment type="disease" evidence="15">
    <disease id="DI-06319">
        <name>Congenital disorder of glycosylation 1W, autosomal dominant</name>
        <acronym>CDG1WAD</acronym>
        <description>A form of congenital disorder of glycosylation, a multisystem disorder caused by a defect in glycoprotein biosynthesis and characterized by under-glycosylated serum glycoproteins. Congenital disorders of glycosylation result in a wide variety of clinical features, such as defects in the nervous system development, psychomotor retardation, dysmorphic features, hypotonia, coagulation disorders, and immunodeficiency. The broad spectrum of features reflects the critical role of N-glycoproteins during embryonic development, differentiation, and maintenance of cell functions. CDG1WAD patients show variable skeletal anomalies, short stature, macrocephaly, and dysmorphic features. Some have impaired intellectual development. Additional features include increased muscle tone and muscle cramps.</description>
        <dbReference type="MIM" id="619714"/>
    </disease>
    <text>The disease is caused by variants affecting the gene represented in this entry.</text>
</comment>
<comment type="similarity">
    <text evidence="23">Belongs to the STT3 family.</text>
</comment>
<dbReference type="EC" id="2.4.99.18" evidence="9 13 18"/>
<dbReference type="EMBL" id="L38961">
    <property type="protein sequence ID" value="AAB05994.1"/>
    <property type="molecule type" value="mRNA"/>
</dbReference>
<dbReference type="EMBL" id="L47337">
    <property type="protein sequence ID" value="AAL77539.1"/>
    <property type="molecule type" value="mRNA"/>
</dbReference>
<dbReference type="EMBL" id="AK290040">
    <property type="protein sequence ID" value="BAF82729.1"/>
    <property type="molecule type" value="mRNA"/>
</dbReference>
<dbReference type="EMBL" id="AK290657">
    <property type="protein sequence ID" value="BAF83346.1"/>
    <property type="molecule type" value="mRNA"/>
</dbReference>
<dbReference type="EMBL" id="AK295892">
    <property type="protein sequence ID" value="BAG58686.1"/>
    <property type="molecule type" value="mRNA"/>
</dbReference>
<dbReference type="EMBL" id="BT007100">
    <property type="protein sequence ID" value="AAP35764.1"/>
    <property type="molecule type" value="mRNA"/>
</dbReference>
<dbReference type="EMBL" id="AP001132">
    <property type="status" value="NOT_ANNOTATED_CDS"/>
    <property type="molecule type" value="Genomic_DNA"/>
</dbReference>
<dbReference type="EMBL" id="AP001494">
    <property type="status" value="NOT_ANNOTATED_CDS"/>
    <property type="molecule type" value="Genomic_DNA"/>
</dbReference>
<dbReference type="EMBL" id="CH471065">
    <property type="protein sequence ID" value="EAW67647.1"/>
    <property type="molecule type" value="Genomic_DNA"/>
</dbReference>
<dbReference type="EMBL" id="BC020965">
    <property type="protein sequence ID" value="AAH20965.1"/>
    <property type="molecule type" value="mRNA"/>
</dbReference>
<dbReference type="EMBL" id="BC048348">
    <property type="protein sequence ID" value="AAH48348.2"/>
    <property type="molecule type" value="mRNA"/>
</dbReference>
<dbReference type="CCDS" id="CCDS60998.1">
    <molecule id="P46977-2"/>
</dbReference>
<dbReference type="CCDS" id="CCDS8458.1">
    <molecule id="P46977-1"/>
</dbReference>
<dbReference type="PIR" id="S70029">
    <property type="entry name" value="S70029"/>
</dbReference>
<dbReference type="RefSeq" id="NP_001265432.1">
    <molecule id="P46977-1"/>
    <property type="nucleotide sequence ID" value="NM_001278503.2"/>
</dbReference>
<dbReference type="RefSeq" id="NP_001265433.1">
    <molecule id="P46977-2"/>
    <property type="nucleotide sequence ID" value="NM_001278504.2"/>
</dbReference>
<dbReference type="RefSeq" id="NP_689926.1">
    <molecule id="P46977-1"/>
    <property type="nucleotide sequence ID" value="NM_152713.5"/>
</dbReference>
<dbReference type="RefSeq" id="XP_011541109.1">
    <molecule id="P46977-1"/>
    <property type="nucleotide sequence ID" value="XM_011542807.4"/>
</dbReference>
<dbReference type="RefSeq" id="XP_047282851.1">
    <molecule id="P46977-1"/>
    <property type="nucleotide sequence ID" value="XM_047426895.1"/>
</dbReference>
<dbReference type="RefSeq" id="XP_047282852.1">
    <molecule id="P46977-1"/>
    <property type="nucleotide sequence ID" value="XM_047426896.1"/>
</dbReference>
<dbReference type="RefSeq" id="XP_047282853.1">
    <molecule id="P46977-1"/>
    <property type="nucleotide sequence ID" value="XM_047426897.1"/>
</dbReference>
<dbReference type="RefSeq" id="XP_054224667.1">
    <molecule id="P46977-1"/>
    <property type="nucleotide sequence ID" value="XM_054368692.1"/>
</dbReference>
<dbReference type="RefSeq" id="XP_054224668.1">
    <molecule id="P46977-1"/>
    <property type="nucleotide sequence ID" value="XM_054368693.1"/>
</dbReference>
<dbReference type="RefSeq" id="XP_054224669.1">
    <molecule id="P46977-1"/>
    <property type="nucleotide sequence ID" value="XM_054368694.1"/>
</dbReference>
<dbReference type="PDB" id="6S7O">
    <property type="method" value="EM"/>
    <property type="resolution" value="3.50 A"/>
    <property type="chains" value="A=1-705"/>
</dbReference>
<dbReference type="PDB" id="8B6L">
    <property type="method" value="EM"/>
    <property type="resolution" value="7.60 A"/>
    <property type="chains" value="I=1-705"/>
</dbReference>
<dbReference type="PDB" id="8PN9">
    <property type="method" value="EM"/>
    <property type="resolution" value="3.61 A"/>
    <property type="chains" value="A=1-705"/>
</dbReference>
<dbReference type="PDBsum" id="6S7O"/>
<dbReference type="PDBsum" id="8B6L"/>
<dbReference type="PDBsum" id="8PN9"/>
<dbReference type="EMDB" id="EMD-10110"/>
<dbReference type="EMDB" id="EMD-15870"/>
<dbReference type="EMDB" id="EMD-17779"/>
<dbReference type="SMR" id="P46977"/>
<dbReference type="BioGRID" id="109908">
    <property type="interactions" value="204"/>
</dbReference>
<dbReference type="ComplexPortal" id="CPX-5621">
    <property type="entry name" value="Oligosaccharyltransferase complex A"/>
</dbReference>
<dbReference type="CORUM" id="P46977"/>
<dbReference type="FunCoup" id="P46977">
    <property type="interactions" value="1698"/>
</dbReference>
<dbReference type="IntAct" id="P46977">
    <property type="interactions" value="117"/>
</dbReference>
<dbReference type="MINT" id="P46977"/>
<dbReference type="STRING" id="9606.ENSP00000376472"/>
<dbReference type="CAZy" id="GT66">
    <property type="family name" value="Glycosyltransferase Family 66"/>
</dbReference>
<dbReference type="TCDB" id="9.B.142.3.17">
    <property type="family name" value="the integral membrane glycosyltransferase family 39 (gt39) family"/>
</dbReference>
<dbReference type="TCDB" id="9.B.142.3.4">
    <property type="family name" value="the integral membrane glycosyltransferase family 39 (gt39) family"/>
</dbReference>
<dbReference type="GlyConnect" id="1188">
    <property type="glycosylation" value="8 N-Linked glycans (2 sites)"/>
</dbReference>
<dbReference type="GlyCosmos" id="P46977">
    <property type="glycosylation" value="5 sites, 9 glycans"/>
</dbReference>
<dbReference type="GlyGen" id="P46977">
    <property type="glycosylation" value="10 sites, 24 N-linked glycans (3 sites), 1 O-linked glycan (5 sites)"/>
</dbReference>
<dbReference type="iPTMnet" id="P46977"/>
<dbReference type="PhosphoSitePlus" id="P46977"/>
<dbReference type="SwissPalm" id="P46977"/>
<dbReference type="BioMuta" id="STT3A"/>
<dbReference type="DMDM" id="182676409"/>
<dbReference type="jPOST" id="P46977"/>
<dbReference type="MassIVE" id="P46977"/>
<dbReference type="PaxDb" id="9606-ENSP00000376472"/>
<dbReference type="PeptideAtlas" id="P46977"/>
<dbReference type="ProteomicsDB" id="22482"/>
<dbReference type="ProteomicsDB" id="55782">
    <molecule id="P46977-1"/>
</dbReference>
<dbReference type="Pumba" id="P46977"/>
<dbReference type="Antibodypedia" id="32954">
    <property type="antibodies" value="105 antibodies from 24 providers"/>
</dbReference>
<dbReference type="DNASU" id="3703"/>
<dbReference type="Ensembl" id="ENST00000392708.9">
    <molecule id="P46977-1"/>
    <property type="protein sequence ID" value="ENSP00000376472.3"/>
    <property type="gene ID" value="ENSG00000134910.14"/>
</dbReference>
<dbReference type="Ensembl" id="ENST00000529196.5">
    <molecule id="P46977-1"/>
    <property type="protein sequence ID" value="ENSP00000436962.1"/>
    <property type="gene ID" value="ENSG00000134910.14"/>
</dbReference>
<dbReference type="Ensembl" id="ENST00000531491.5">
    <molecule id="P46977-2"/>
    <property type="protein sequence ID" value="ENSP00000432820.1"/>
    <property type="gene ID" value="ENSG00000134910.14"/>
</dbReference>
<dbReference type="Ensembl" id="ENST00000649491.1">
    <molecule id="P46977-1"/>
    <property type="protein sequence ID" value="ENSP00000497336.1"/>
    <property type="gene ID" value="ENSG00000134910.14"/>
</dbReference>
<dbReference type="GeneID" id="3703"/>
<dbReference type="KEGG" id="hsa:3703"/>
<dbReference type="MANE-Select" id="ENST00000392708.9">
    <property type="protein sequence ID" value="ENSP00000376472.3"/>
    <property type="RefSeq nucleotide sequence ID" value="NM_152713.5"/>
    <property type="RefSeq protein sequence ID" value="NP_689926.1"/>
</dbReference>
<dbReference type="UCSC" id="uc001qcd.4">
    <molecule id="P46977-1"/>
    <property type="organism name" value="human"/>
</dbReference>
<dbReference type="AGR" id="HGNC:6172"/>
<dbReference type="CTD" id="3703"/>
<dbReference type="DisGeNET" id="3703"/>
<dbReference type="GeneCards" id="STT3A"/>
<dbReference type="HGNC" id="HGNC:6172">
    <property type="gene designation" value="STT3A"/>
</dbReference>
<dbReference type="HPA" id="ENSG00000134910">
    <property type="expression patterns" value="Tissue enhanced (parathyroid)"/>
</dbReference>
<dbReference type="MalaCards" id="STT3A"/>
<dbReference type="MIM" id="601134">
    <property type="type" value="gene"/>
</dbReference>
<dbReference type="MIM" id="615596">
    <property type="type" value="phenotype"/>
</dbReference>
<dbReference type="MIM" id="619714">
    <property type="type" value="phenotype"/>
</dbReference>
<dbReference type="neXtProt" id="NX_P46977"/>
<dbReference type="OpenTargets" id="ENSG00000134910"/>
<dbReference type="Orphanet" id="370921">
    <property type="disease" value="STT3A-CDG"/>
</dbReference>
<dbReference type="PharmGKB" id="PA29969"/>
<dbReference type="VEuPathDB" id="HostDB:ENSG00000134910"/>
<dbReference type="eggNOG" id="KOG2292">
    <property type="taxonomic scope" value="Eukaryota"/>
</dbReference>
<dbReference type="GeneTree" id="ENSGT00940000156655"/>
<dbReference type="HOGENOM" id="CLU_009279_1_0_1"/>
<dbReference type="InParanoid" id="P46977"/>
<dbReference type="OMA" id="TWYAIGT"/>
<dbReference type="OrthoDB" id="10261066at2759"/>
<dbReference type="PAN-GO" id="P46977">
    <property type="GO annotations" value="3 GO annotations based on evolutionary models"/>
</dbReference>
<dbReference type="PhylomeDB" id="P46977"/>
<dbReference type="TreeFam" id="TF300822"/>
<dbReference type="BRENDA" id="2.4.99.18">
    <property type="organism ID" value="2681"/>
</dbReference>
<dbReference type="PathwayCommons" id="P46977"/>
<dbReference type="Reactome" id="R-HSA-446203">
    <property type="pathway name" value="Asparagine N-linked glycosylation"/>
</dbReference>
<dbReference type="Reactome" id="R-HSA-9694548">
    <property type="pathway name" value="Maturation of spike protein"/>
</dbReference>
<dbReference type="SignaLink" id="P46977"/>
<dbReference type="SIGNOR" id="P46977"/>
<dbReference type="UniPathway" id="UPA00378"/>
<dbReference type="BioGRID-ORCS" id="3703">
    <property type="hits" value="215 hits in 1183 CRISPR screens"/>
</dbReference>
<dbReference type="ChiTaRS" id="STT3A">
    <property type="organism name" value="human"/>
</dbReference>
<dbReference type="GenomeRNAi" id="3703"/>
<dbReference type="Pharos" id="P46977">
    <property type="development level" value="Tbio"/>
</dbReference>
<dbReference type="PRO" id="PR:P46977"/>
<dbReference type="Proteomes" id="UP000005640">
    <property type="component" value="Chromosome 11"/>
</dbReference>
<dbReference type="RNAct" id="P46977">
    <property type="molecule type" value="protein"/>
</dbReference>
<dbReference type="Bgee" id="ENSG00000134910">
    <property type="expression patterns" value="Expressed in stromal cell of endometrium and 179 other cell types or tissues"/>
</dbReference>
<dbReference type="ExpressionAtlas" id="P46977">
    <property type="expression patterns" value="baseline and differential"/>
</dbReference>
<dbReference type="GO" id="GO:0005789">
    <property type="term" value="C:endoplasmic reticulum membrane"/>
    <property type="evidence" value="ECO:0000304"/>
    <property type="project" value="Reactome"/>
</dbReference>
<dbReference type="GO" id="GO:0016020">
    <property type="term" value="C:membrane"/>
    <property type="evidence" value="ECO:0007005"/>
    <property type="project" value="UniProtKB"/>
</dbReference>
<dbReference type="GO" id="GO:0008250">
    <property type="term" value="C:oligosaccharyltransferase complex"/>
    <property type="evidence" value="ECO:0000314"/>
    <property type="project" value="ARUK-UCL"/>
</dbReference>
<dbReference type="GO" id="GO:0160226">
    <property type="term" value="C:oligosaccharyltransferase complex A"/>
    <property type="evidence" value="ECO:0000314"/>
    <property type="project" value="UniProtKB"/>
</dbReference>
<dbReference type="GO" id="GO:0004579">
    <property type="term" value="F:dolichyl-diphosphooligosaccharide-protein glycotransferase activity"/>
    <property type="evidence" value="ECO:0000314"/>
    <property type="project" value="UniProtKB"/>
</dbReference>
<dbReference type="GO" id="GO:0046872">
    <property type="term" value="F:metal ion binding"/>
    <property type="evidence" value="ECO:0007669"/>
    <property type="project" value="UniProtKB-KW"/>
</dbReference>
<dbReference type="GO" id="GO:0043686">
    <property type="term" value="P:co-translational protein modification"/>
    <property type="evidence" value="ECO:0000314"/>
    <property type="project" value="UniProtKB"/>
</dbReference>
<dbReference type="GO" id="GO:0043687">
    <property type="term" value="P:post-translational protein modification"/>
    <property type="evidence" value="ECO:0000318"/>
    <property type="project" value="GO_Central"/>
</dbReference>
<dbReference type="GO" id="GO:0006487">
    <property type="term" value="P:protein N-linked glycosylation"/>
    <property type="evidence" value="ECO:0000315"/>
    <property type="project" value="ARUK-UCL"/>
</dbReference>
<dbReference type="GO" id="GO:0018279">
    <property type="term" value="P:protein N-linked glycosylation via asparagine"/>
    <property type="evidence" value="ECO:0000314"/>
    <property type="project" value="UniProtKB"/>
</dbReference>
<dbReference type="FunFam" id="3.40.50.12610:FF:000002">
    <property type="entry name" value="dolichyl-diphosphooligosaccharide--protein glycosyltransferase subunit STT3A"/>
    <property type="match status" value="1"/>
</dbReference>
<dbReference type="Gene3D" id="3.40.50.12610">
    <property type="match status" value="1"/>
</dbReference>
<dbReference type="InterPro" id="IPR054479">
    <property type="entry name" value="AglB-like_core"/>
</dbReference>
<dbReference type="InterPro" id="IPR003674">
    <property type="entry name" value="Oligo_trans_STT3"/>
</dbReference>
<dbReference type="InterPro" id="IPR048307">
    <property type="entry name" value="STT3_N"/>
</dbReference>
<dbReference type="PANTHER" id="PTHR13872">
    <property type="entry name" value="DOLICHYL-DIPHOSPHOOLIGOSACCHARIDE--PROTEIN GLYCOSYLTRANSFERASE SUBUNIT"/>
    <property type="match status" value="1"/>
</dbReference>
<dbReference type="PANTHER" id="PTHR13872:SF43">
    <property type="entry name" value="DOLICHYL-DIPHOSPHOOLIGOSACCHARIDE--PROTEIN GLYCOSYLTRANSFERASE SUBUNIT STT3A"/>
    <property type="match status" value="1"/>
</dbReference>
<dbReference type="Pfam" id="PF22627">
    <property type="entry name" value="AglB_core-like"/>
    <property type="match status" value="1"/>
</dbReference>
<dbReference type="Pfam" id="PF02516">
    <property type="entry name" value="STT3"/>
    <property type="match status" value="1"/>
</dbReference>